<accession>Q2UVD8</accession>
<dbReference type="EMBL" id="AM177389">
    <property type="protein sequence ID" value="CAJ46679.1"/>
    <property type="molecule type" value="Genomic_DNA"/>
</dbReference>
<dbReference type="SMR" id="Q2UVD8"/>
<dbReference type="GO" id="GO:0009535">
    <property type="term" value="C:chloroplast thylakoid membrane"/>
    <property type="evidence" value="ECO:0007669"/>
    <property type="project" value="UniProtKB-SubCell"/>
</dbReference>
<dbReference type="GO" id="GO:0009539">
    <property type="term" value="C:photosystem II reaction center"/>
    <property type="evidence" value="ECO:0007669"/>
    <property type="project" value="InterPro"/>
</dbReference>
<dbReference type="GO" id="GO:0009055">
    <property type="term" value="F:electron transfer activity"/>
    <property type="evidence" value="ECO:0007669"/>
    <property type="project" value="UniProtKB-UniRule"/>
</dbReference>
<dbReference type="GO" id="GO:0020037">
    <property type="term" value="F:heme binding"/>
    <property type="evidence" value="ECO:0007669"/>
    <property type="project" value="InterPro"/>
</dbReference>
<dbReference type="GO" id="GO:0005506">
    <property type="term" value="F:iron ion binding"/>
    <property type="evidence" value="ECO:0007669"/>
    <property type="project" value="UniProtKB-UniRule"/>
</dbReference>
<dbReference type="GO" id="GO:0009767">
    <property type="term" value="P:photosynthetic electron transport chain"/>
    <property type="evidence" value="ECO:0007669"/>
    <property type="project" value="InterPro"/>
</dbReference>
<dbReference type="HAMAP" id="MF_00643">
    <property type="entry name" value="PSII_PsbF"/>
    <property type="match status" value="1"/>
</dbReference>
<dbReference type="InterPro" id="IPR006241">
    <property type="entry name" value="PSII_cyt_b559_bsu"/>
</dbReference>
<dbReference type="InterPro" id="IPR006216">
    <property type="entry name" value="PSII_cyt_b559_CS"/>
</dbReference>
<dbReference type="InterPro" id="IPR013081">
    <property type="entry name" value="PSII_cyt_b559_N"/>
</dbReference>
<dbReference type="NCBIfam" id="TIGR01333">
    <property type="entry name" value="cyt_b559_beta"/>
    <property type="match status" value="1"/>
</dbReference>
<dbReference type="Pfam" id="PF00283">
    <property type="entry name" value="Cytochrom_B559"/>
    <property type="match status" value="1"/>
</dbReference>
<dbReference type="PIRSF" id="PIRSF000037">
    <property type="entry name" value="PsbF"/>
    <property type="match status" value="1"/>
</dbReference>
<dbReference type="SUPFAM" id="SSF161045">
    <property type="entry name" value="Cytochrome b559 subunits"/>
    <property type="match status" value="1"/>
</dbReference>
<dbReference type="PROSITE" id="PS00537">
    <property type="entry name" value="CYTOCHROME_B559"/>
    <property type="match status" value="1"/>
</dbReference>
<gene>
    <name evidence="1" type="primary">psbF</name>
</gene>
<feature type="chain" id="PRO_0000233646" description="Cytochrome b559 subunit beta">
    <location>
        <begin position="1"/>
        <end position="39"/>
    </location>
</feature>
<feature type="transmembrane region" description="Helical" evidence="1">
    <location>
        <begin position="14"/>
        <end position="30"/>
    </location>
</feature>
<feature type="binding site" description="axial binding residue" evidence="1">
    <location>
        <position position="18"/>
    </location>
    <ligand>
        <name>heme</name>
        <dbReference type="ChEBI" id="CHEBI:30413"/>
        <note>ligand shared with alpha subunit</note>
    </ligand>
    <ligandPart>
        <name>Fe</name>
        <dbReference type="ChEBI" id="CHEBI:18248"/>
    </ligandPart>
</feature>
<reference key="1">
    <citation type="journal article" date="2006" name="EMBO Rep.">
        <title>Maintenance of plastid RNA editing activities independently of their target sites.</title>
        <authorList>
            <person name="Tillich M."/>
            <person name="Poltnigg P."/>
            <person name="Kushnir S."/>
            <person name="Schmitz-Linneweber C."/>
        </authorList>
    </citation>
    <scope>NUCLEOTIDE SEQUENCE [GENOMIC DNA]</scope>
    <scope>ABSENCE OF RNA EDITING</scope>
    <source>
        <tissue>Leaf</tissue>
    </source>
</reference>
<sequence>MTIDRTYPIFTVRWLAVHGLAVPTVFFLGSISAMQFIQR</sequence>
<comment type="function">
    <text evidence="1">This b-type cytochrome is tightly associated with the reaction center of photosystem II (PSII). PSII is a light-driven water:plastoquinone oxidoreductase that uses light energy to abstract electrons from H(2)O, generating O(2) and a proton gradient subsequently used for ATP formation. It consists of a core antenna complex that captures photons, and an electron transfer chain that converts photonic excitation into a charge separation.</text>
</comment>
<comment type="cofactor">
    <cofactor evidence="1">
        <name>heme b</name>
        <dbReference type="ChEBI" id="CHEBI:60344"/>
    </cofactor>
    <text evidence="1">With its partner (PsbE) binds heme. PSII binds additional chlorophylls, carotenoids and specific lipids.</text>
</comment>
<comment type="subunit">
    <text evidence="1">Heterodimer of an alpha subunit and a beta subunit. PSII is composed of 1 copy each of membrane proteins PsbA, PsbB, PsbC, PsbD, PsbE, PsbF, PsbH, PsbI, PsbJ, PsbK, PsbL, PsbM, PsbT, PsbX, PsbY, PsbZ, Psb30/Ycf12, at least 3 peripheral proteins of the oxygen-evolving complex and a large number of cofactors. It forms dimeric complexes.</text>
</comment>
<comment type="subcellular location">
    <subcellularLocation>
        <location evidence="1">Plastid</location>
        <location evidence="1">Chloroplast thylakoid membrane</location>
        <topology evidence="1">Single-pass membrane protein</topology>
    </subcellularLocation>
</comment>
<comment type="similarity">
    <text evidence="1">Belongs to the PsbE/PsbF family.</text>
</comment>
<keyword id="KW-0150">Chloroplast</keyword>
<keyword id="KW-0249">Electron transport</keyword>
<keyword id="KW-0349">Heme</keyword>
<keyword id="KW-0408">Iron</keyword>
<keyword id="KW-0472">Membrane</keyword>
<keyword id="KW-0479">Metal-binding</keyword>
<keyword id="KW-0602">Photosynthesis</keyword>
<keyword id="KW-0604">Photosystem II</keyword>
<keyword id="KW-0934">Plastid</keyword>
<keyword id="KW-0793">Thylakoid</keyword>
<keyword id="KW-0812">Transmembrane</keyword>
<keyword id="KW-1133">Transmembrane helix</keyword>
<keyword id="KW-0813">Transport</keyword>
<evidence type="ECO:0000255" key="1">
    <source>
        <dbReference type="HAMAP-Rule" id="MF_00643"/>
    </source>
</evidence>
<name>PSBF_NICGU</name>
<organism>
    <name type="scientific">Nicotiana glutinosa</name>
    <name type="common">Tobacco</name>
    <dbReference type="NCBI Taxonomy" id="35889"/>
    <lineage>
        <taxon>Eukaryota</taxon>
        <taxon>Viridiplantae</taxon>
        <taxon>Streptophyta</taxon>
        <taxon>Embryophyta</taxon>
        <taxon>Tracheophyta</taxon>
        <taxon>Spermatophyta</taxon>
        <taxon>Magnoliopsida</taxon>
        <taxon>eudicotyledons</taxon>
        <taxon>Gunneridae</taxon>
        <taxon>Pentapetalae</taxon>
        <taxon>asterids</taxon>
        <taxon>lamiids</taxon>
        <taxon>Solanales</taxon>
        <taxon>Solanaceae</taxon>
        <taxon>Nicotianoideae</taxon>
        <taxon>Nicotianeae</taxon>
        <taxon>Nicotiana</taxon>
    </lineage>
</organism>
<proteinExistence type="evidence at transcript level"/>
<protein>
    <recommendedName>
        <fullName evidence="1">Cytochrome b559 subunit beta</fullName>
    </recommendedName>
    <alternativeName>
        <fullName evidence="1">PSII reaction center subunit VI</fullName>
    </alternativeName>
</protein>
<geneLocation type="chloroplast"/>